<keyword id="KW-0997">Cell inner membrane</keyword>
<keyword id="KW-1003">Cell membrane</keyword>
<keyword id="KW-0444">Lipid biosynthesis</keyword>
<keyword id="KW-0443">Lipid metabolism</keyword>
<keyword id="KW-0472">Membrane</keyword>
<keyword id="KW-0594">Phospholipid biosynthesis</keyword>
<keyword id="KW-1208">Phospholipid metabolism</keyword>
<keyword id="KW-0808">Transferase</keyword>
<keyword id="KW-0812">Transmembrane</keyword>
<keyword id="KW-1133">Transmembrane helix</keyword>
<proteinExistence type="inferred from homology"/>
<organism>
    <name type="scientific">Ruthia magnifica subsp. Calyptogena magnifica</name>
    <dbReference type="NCBI Taxonomy" id="413404"/>
    <lineage>
        <taxon>Bacteria</taxon>
        <taxon>Pseudomonadati</taxon>
        <taxon>Pseudomonadota</taxon>
        <taxon>Gammaproteobacteria</taxon>
        <taxon>Candidatus Pseudothioglobaceae</taxon>
        <taxon>Candidatus Ruthturnera</taxon>
    </lineage>
</organism>
<reference key="1">
    <citation type="journal article" date="2007" name="Science">
        <title>The Calyptogena magnifica chemoautotrophic symbiont genome.</title>
        <authorList>
            <person name="Newton I.L.G."/>
            <person name="Woyke T."/>
            <person name="Auchtung T.A."/>
            <person name="Dilly G.F."/>
            <person name="Dutton R.J."/>
            <person name="Fisher M.C."/>
            <person name="Fontanez K.M."/>
            <person name="Lau E."/>
            <person name="Stewart F.J."/>
            <person name="Richardson P.M."/>
            <person name="Barry K.W."/>
            <person name="Saunders E."/>
            <person name="Detter J.C."/>
            <person name="Wu D."/>
            <person name="Eisen J.A."/>
            <person name="Cavanaugh C.M."/>
        </authorList>
    </citation>
    <scope>NUCLEOTIDE SEQUENCE [LARGE SCALE GENOMIC DNA]</scope>
</reference>
<dbReference type="EC" id="2.3.1.275" evidence="1"/>
<dbReference type="EMBL" id="CP000488">
    <property type="protein sequence ID" value="ABL02667.1"/>
    <property type="molecule type" value="Genomic_DNA"/>
</dbReference>
<dbReference type="RefSeq" id="WP_011738292.1">
    <property type="nucleotide sequence ID" value="NC_008610.1"/>
</dbReference>
<dbReference type="SMR" id="A1AXL0"/>
<dbReference type="STRING" id="413404.Rmag_0958"/>
<dbReference type="KEGG" id="rma:Rmag_0958"/>
<dbReference type="eggNOG" id="COG0344">
    <property type="taxonomic scope" value="Bacteria"/>
</dbReference>
<dbReference type="HOGENOM" id="CLU_081254_0_0_6"/>
<dbReference type="OrthoDB" id="9777124at2"/>
<dbReference type="UniPathway" id="UPA00085"/>
<dbReference type="Proteomes" id="UP000002587">
    <property type="component" value="Chromosome"/>
</dbReference>
<dbReference type="GO" id="GO:0005886">
    <property type="term" value="C:plasma membrane"/>
    <property type="evidence" value="ECO:0007669"/>
    <property type="project" value="UniProtKB-SubCell"/>
</dbReference>
<dbReference type="GO" id="GO:0043772">
    <property type="term" value="F:acyl-phosphate glycerol-3-phosphate acyltransferase activity"/>
    <property type="evidence" value="ECO:0007669"/>
    <property type="project" value="UniProtKB-UniRule"/>
</dbReference>
<dbReference type="GO" id="GO:0008654">
    <property type="term" value="P:phospholipid biosynthetic process"/>
    <property type="evidence" value="ECO:0007669"/>
    <property type="project" value="UniProtKB-UniRule"/>
</dbReference>
<dbReference type="HAMAP" id="MF_01043">
    <property type="entry name" value="PlsY"/>
    <property type="match status" value="1"/>
</dbReference>
<dbReference type="InterPro" id="IPR003811">
    <property type="entry name" value="G3P_acylTferase_PlsY"/>
</dbReference>
<dbReference type="NCBIfam" id="TIGR00023">
    <property type="entry name" value="glycerol-3-phosphate 1-O-acyltransferase PlsY"/>
    <property type="match status" value="1"/>
</dbReference>
<dbReference type="PANTHER" id="PTHR30309:SF0">
    <property type="entry name" value="GLYCEROL-3-PHOSPHATE ACYLTRANSFERASE-RELATED"/>
    <property type="match status" value="1"/>
</dbReference>
<dbReference type="PANTHER" id="PTHR30309">
    <property type="entry name" value="INNER MEMBRANE PROTEIN YGIH"/>
    <property type="match status" value="1"/>
</dbReference>
<dbReference type="Pfam" id="PF02660">
    <property type="entry name" value="G3P_acyltransf"/>
    <property type="match status" value="1"/>
</dbReference>
<dbReference type="SMART" id="SM01207">
    <property type="entry name" value="G3P_acyltransf"/>
    <property type="match status" value="1"/>
</dbReference>
<gene>
    <name evidence="1" type="primary">plsY</name>
    <name type="ordered locus">Rmag_0958</name>
</gene>
<accession>A1AXL0</accession>
<name>PLSY_RUTMC</name>
<comment type="function">
    <text evidence="1">Catalyzes the transfer of an acyl group from acyl-phosphate (acyl-PO(4)) to glycerol-3-phosphate (G3P) to form lysophosphatidic acid (LPA). This enzyme utilizes acyl-phosphate as fatty acyl donor, but not acyl-CoA or acyl-ACP.</text>
</comment>
<comment type="catalytic activity">
    <reaction evidence="1">
        <text>an acyl phosphate + sn-glycerol 3-phosphate = a 1-acyl-sn-glycero-3-phosphate + phosphate</text>
        <dbReference type="Rhea" id="RHEA:34075"/>
        <dbReference type="ChEBI" id="CHEBI:43474"/>
        <dbReference type="ChEBI" id="CHEBI:57597"/>
        <dbReference type="ChEBI" id="CHEBI:57970"/>
        <dbReference type="ChEBI" id="CHEBI:59918"/>
        <dbReference type="EC" id="2.3.1.275"/>
    </reaction>
</comment>
<comment type="pathway">
    <text evidence="1">Lipid metabolism; phospholipid metabolism.</text>
</comment>
<comment type="subunit">
    <text evidence="1">Probably interacts with PlsX.</text>
</comment>
<comment type="subcellular location">
    <subcellularLocation>
        <location evidence="1">Cell inner membrane</location>
        <topology evidence="1">Multi-pass membrane protein</topology>
    </subcellularLocation>
</comment>
<comment type="similarity">
    <text evidence="1">Belongs to the PlsY family.</text>
</comment>
<sequence>MLPELLFIVLLLLSYLIGSISTAIIVCKMFNLPDSRTQGSNNPGATNVLRIGGKKAAAITLIGDGLKGAIPVLIAHYLAFNMLNVTWVILVTFLGHVYPIFFSFKGGKGVATFLGALLALSYLTGLSFIITWVFVAKVLKISSLSALISTVLTPVYFYLITNNLASTYVIILICLWIFYTHQSNIKRLLNSQENKIN</sequence>
<feature type="chain" id="PRO_1000064218" description="Glycerol-3-phosphate acyltransferase">
    <location>
        <begin position="1"/>
        <end position="197"/>
    </location>
</feature>
<feature type="transmembrane region" description="Helical" evidence="1">
    <location>
        <begin position="6"/>
        <end position="26"/>
    </location>
</feature>
<feature type="transmembrane region" description="Helical" evidence="1">
    <location>
        <begin position="58"/>
        <end position="78"/>
    </location>
</feature>
<feature type="transmembrane region" description="Helical" evidence="1">
    <location>
        <begin position="82"/>
        <end position="102"/>
    </location>
</feature>
<feature type="transmembrane region" description="Helical" evidence="1">
    <location>
        <begin position="116"/>
        <end position="136"/>
    </location>
</feature>
<feature type="transmembrane region" description="Helical" evidence="1">
    <location>
        <begin position="157"/>
        <end position="177"/>
    </location>
</feature>
<evidence type="ECO:0000255" key="1">
    <source>
        <dbReference type="HAMAP-Rule" id="MF_01043"/>
    </source>
</evidence>
<protein>
    <recommendedName>
        <fullName evidence="1">Glycerol-3-phosphate acyltransferase</fullName>
    </recommendedName>
    <alternativeName>
        <fullName evidence="1">Acyl-PO4 G3P acyltransferase</fullName>
    </alternativeName>
    <alternativeName>
        <fullName evidence="1">Acyl-phosphate--glycerol-3-phosphate acyltransferase</fullName>
    </alternativeName>
    <alternativeName>
        <fullName evidence="1">G3P acyltransferase</fullName>
        <shortName evidence="1">GPAT</shortName>
        <ecNumber evidence="1">2.3.1.275</ecNumber>
    </alternativeName>
    <alternativeName>
        <fullName evidence="1">Lysophosphatidic acid synthase</fullName>
        <shortName evidence="1">LPA synthase</shortName>
    </alternativeName>
</protein>